<evidence type="ECO:0000255" key="1">
    <source>
        <dbReference type="HAMAP-Rule" id="MF_01310"/>
    </source>
</evidence>
<evidence type="ECO:0000305" key="2"/>
<proteinExistence type="inferred from homology"/>
<dbReference type="EMBL" id="CP001177">
    <property type="protein sequence ID" value="ACJ77862.1"/>
    <property type="molecule type" value="Genomic_DNA"/>
</dbReference>
<dbReference type="SMR" id="B7HQX0"/>
<dbReference type="KEGG" id="bcr:BCAH187_A0167"/>
<dbReference type="HOGENOM" id="CLU_072439_5_0_9"/>
<dbReference type="Proteomes" id="UP000002214">
    <property type="component" value="Chromosome"/>
</dbReference>
<dbReference type="GO" id="GO:1990904">
    <property type="term" value="C:ribonucleoprotein complex"/>
    <property type="evidence" value="ECO:0007669"/>
    <property type="project" value="UniProtKB-KW"/>
</dbReference>
<dbReference type="GO" id="GO:0005840">
    <property type="term" value="C:ribosome"/>
    <property type="evidence" value="ECO:0007669"/>
    <property type="project" value="UniProtKB-KW"/>
</dbReference>
<dbReference type="GO" id="GO:0019843">
    <property type="term" value="F:rRNA binding"/>
    <property type="evidence" value="ECO:0007669"/>
    <property type="project" value="UniProtKB-UniRule"/>
</dbReference>
<dbReference type="GO" id="GO:0003735">
    <property type="term" value="F:structural constituent of ribosome"/>
    <property type="evidence" value="ECO:0007669"/>
    <property type="project" value="InterPro"/>
</dbReference>
<dbReference type="GO" id="GO:0006412">
    <property type="term" value="P:translation"/>
    <property type="evidence" value="ECO:0007669"/>
    <property type="project" value="UniProtKB-UniRule"/>
</dbReference>
<dbReference type="FunFam" id="3.30.420.80:FF:000001">
    <property type="entry name" value="30S ribosomal protein S11"/>
    <property type="match status" value="1"/>
</dbReference>
<dbReference type="Gene3D" id="3.30.420.80">
    <property type="entry name" value="Ribosomal protein S11"/>
    <property type="match status" value="1"/>
</dbReference>
<dbReference type="HAMAP" id="MF_01310">
    <property type="entry name" value="Ribosomal_uS11"/>
    <property type="match status" value="1"/>
</dbReference>
<dbReference type="InterPro" id="IPR001971">
    <property type="entry name" value="Ribosomal_uS11"/>
</dbReference>
<dbReference type="InterPro" id="IPR019981">
    <property type="entry name" value="Ribosomal_uS11_bac-type"/>
</dbReference>
<dbReference type="InterPro" id="IPR018102">
    <property type="entry name" value="Ribosomal_uS11_CS"/>
</dbReference>
<dbReference type="InterPro" id="IPR036967">
    <property type="entry name" value="Ribosomal_uS11_sf"/>
</dbReference>
<dbReference type="NCBIfam" id="NF003698">
    <property type="entry name" value="PRK05309.1"/>
    <property type="match status" value="1"/>
</dbReference>
<dbReference type="NCBIfam" id="TIGR03632">
    <property type="entry name" value="uS11_bact"/>
    <property type="match status" value="1"/>
</dbReference>
<dbReference type="PANTHER" id="PTHR11759">
    <property type="entry name" value="40S RIBOSOMAL PROTEIN S14/30S RIBOSOMAL PROTEIN S11"/>
    <property type="match status" value="1"/>
</dbReference>
<dbReference type="Pfam" id="PF00411">
    <property type="entry name" value="Ribosomal_S11"/>
    <property type="match status" value="1"/>
</dbReference>
<dbReference type="PIRSF" id="PIRSF002131">
    <property type="entry name" value="Ribosomal_S11"/>
    <property type="match status" value="1"/>
</dbReference>
<dbReference type="SUPFAM" id="SSF53137">
    <property type="entry name" value="Translational machinery components"/>
    <property type="match status" value="1"/>
</dbReference>
<dbReference type="PROSITE" id="PS00054">
    <property type="entry name" value="RIBOSOMAL_S11"/>
    <property type="match status" value="1"/>
</dbReference>
<organism>
    <name type="scientific">Bacillus cereus (strain AH187)</name>
    <dbReference type="NCBI Taxonomy" id="405534"/>
    <lineage>
        <taxon>Bacteria</taxon>
        <taxon>Bacillati</taxon>
        <taxon>Bacillota</taxon>
        <taxon>Bacilli</taxon>
        <taxon>Bacillales</taxon>
        <taxon>Bacillaceae</taxon>
        <taxon>Bacillus</taxon>
        <taxon>Bacillus cereus group</taxon>
    </lineage>
</organism>
<comment type="function">
    <text evidence="1">Located on the platform of the 30S subunit, it bridges several disparate RNA helices of the 16S rRNA. Forms part of the Shine-Dalgarno cleft in the 70S ribosome.</text>
</comment>
<comment type="subunit">
    <text evidence="1">Part of the 30S ribosomal subunit. Interacts with proteins S7 and S18. Binds to IF-3.</text>
</comment>
<comment type="similarity">
    <text evidence="1">Belongs to the universal ribosomal protein uS11 family.</text>
</comment>
<accession>B7HQX0</accession>
<gene>
    <name evidence="1" type="primary">rpsK</name>
    <name type="ordered locus">BCAH187_A0167</name>
</gene>
<name>RS11_BACC7</name>
<feature type="chain" id="PRO_1000141054" description="Small ribosomal subunit protein uS11">
    <location>
        <begin position="1"/>
        <end position="129"/>
    </location>
</feature>
<keyword id="KW-0687">Ribonucleoprotein</keyword>
<keyword id="KW-0689">Ribosomal protein</keyword>
<keyword id="KW-0694">RNA-binding</keyword>
<keyword id="KW-0699">rRNA-binding</keyword>
<sequence length="129" mass="13739">MARKTNTRKKRVKKNIEAGVAHIRSTFNNTIVTLTDTHGNALSWSSAGALGFRGSRKSTPFAAQMAAETAAKAAMEHGLKTLEVTVKGPGAGREAAIRALQAAGLEVTAIRDVTPVPHNGCRPPKRRRV</sequence>
<reference key="1">
    <citation type="submission" date="2008-10" db="EMBL/GenBank/DDBJ databases">
        <title>Genome sequence of Bacillus cereus AH187.</title>
        <authorList>
            <person name="Dodson R.J."/>
            <person name="Durkin A.S."/>
            <person name="Rosovitz M.J."/>
            <person name="Rasko D.A."/>
            <person name="Kolsto A.B."/>
            <person name="Okstad O.A."/>
            <person name="Ravel J."/>
            <person name="Sutton G."/>
        </authorList>
    </citation>
    <scope>NUCLEOTIDE SEQUENCE [LARGE SCALE GENOMIC DNA]</scope>
    <source>
        <strain>AH187</strain>
    </source>
</reference>
<protein>
    <recommendedName>
        <fullName evidence="1">Small ribosomal subunit protein uS11</fullName>
    </recommendedName>
    <alternativeName>
        <fullName evidence="2">30S ribosomal protein S11</fullName>
    </alternativeName>
</protein>